<reference key="1">
    <citation type="journal article" date="2007" name="Genome Res.">
        <title>Genome characteristics of facultatively symbiotic Frankia sp. strains reflect host range and host plant biogeography.</title>
        <authorList>
            <person name="Normand P."/>
            <person name="Lapierre P."/>
            <person name="Tisa L.S."/>
            <person name="Gogarten J.P."/>
            <person name="Alloisio N."/>
            <person name="Bagnarol E."/>
            <person name="Bassi C.A."/>
            <person name="Berry A.M."/>
            <person name="Bickhart D.M."/>
            <person name="Choisne N."/>
            <person name="Couloux A."/>
            <person name="Cournoyer B."/>
            <person name="Cruveiller S."/>
            <person name="Daubin V."/>
            <person name="Demange N."/>
            <person name="Francino M.P."/>
            <person name="Goltsman E."/>
            <person name="Huang Y."/>
            <person name="Kopp O.R."/>
            <person name="Labarre L."/>
            <person name="Lapidus A."/>
            <person name="Lavire C."/>
            <person name="Marechal J."/>
            <person name="Martinez M."/>
            <person name="Mastronunzio J.E."/>
            <person name="Mullin B.C."/>
            <person name="Niemann J."/>
            <person name="Pujic P."/>
            <person name="Rawnsley T."/>
            <person name="Rouy Z."/>
            <person name="Schenowitz C."/>
            <person name="Sellstedt A."/>
            <person name="Tavares F."/>
            <person name="Tomkins J.P."/>
            <person name="Vallenet D."/>
            <person name="Valverde C."/>
            <person name="Wall L.G."/>
            <person name="Wang Y."/>
            <person name="Medigue C."/>
            <person name="Benson D.R."/>
        </authorList>
    </citation>
    <scope>NUCLEOTIDE SEQUENCE [LARGE SCALE GENOMIC DNA]</scope>
    <source>
        <strain>EAN1pec</strain>
    </source>
</reference>
<proteinExistence type="inferred from homology"/>
<protein>
    <recommendedName>
        <fullName evidence="1">Probable transcriptional regulatory protein Franean1_5147</fullName>
    </recommendedName>
</protein>
<accession>A8KZE9</accession>
<organism>
    <name type="scientific">Parafrankia sp. (strain EAN1pec)</name>
    <dbReference type="NCBI Taxonomy" id="298653"/>
    <lineage>
        <taxon>Bacteria</taxon>
        <taxon>Bacillati</taxon>
        <taxon>Actinomycetota</taxon>
        <taxon>Actinomycetes</taxon>
        <taxon>Frankiales</taxon>
        <taxon>Frankiaceae</taxon>
        <taxon>Parafrankia</taxon>
    </lineage>
</organism>
<keyword id="KW-0963">Cytoplasm</keyword>
<keyword id="KW-0238">DNA-binding</keyword>
<keyword id="KW-0804">Transcription</keyword>
<keyword id="KW-0805">Transcription regulation</keyword>
<feature type="chain" id="PRO_1000132194" description="Probable transcriptional regulatory protein Franean1_5147">
    <location>
        <begin position="1"/>
        <end position="251"/>
    </location>
</feature>
<gene>
    <name type="ordered locus">Franean1_5147</name>
</gene>
<evidence type="ECO:0000255" key="1">
    <source>
        <dbReference type="HAMAP-Rule" id="MF_00693"/>
    </source>
</evidence>
<dbReference type="EMBL" id="CP000820">
    <property type="protein sequence ID" value="ABW14505.1"/>
    <property type="molecule type" value="Genomic_DNA"/>
</dbReference>
<dbReference type="RefSeq" id="WP_020462620.1">
    <property type="nucleotide sequence ID" value="NC_009921.1"/>
</dbReference>
<dbReference type="SMR" id="A8KZE9"/>
<dbReference type="STRING" id="298653.Franean1_5147"/>
<dbReference type="KEGG" id="fre:Franean1_5147"/>
<dbReference type="eggNOG" id="COG0217">
    <property type="taxonomic scope" value="Bacteria"/>
</dbReference>
<dbReference type="HOGENOM" id="CLU_062974_2_2_11"/>
<dbReference type="GO" id="GO:0005829">
    <property type="term" value="C:cytosol"/>
    <property type="evidence" value="ECO:0007669"/>
    <property type="project" value="TreeGrafter"/>
</dbReference>
<dbReference type="GO" id="GO:0003677">
    <property type="term" value="F:DNA binding"/>
    <property type="evidence" value="ECO:0007669"/>
    <property type="project" value="UniProtKB-UniRule"/>
</dbReference>
<dbReference type="GO" id="GO:0006355">
    <property type="term" value="P:regulation of DNA-templated transcription"/>
    <property type="evidence" value="ECO:0007669"/>
    <property type="project" value="UniProtKB-UniRule"/>
</dbReference>
<dbReference type="FunFam" id="1.10.10.200:FF:000002">
    <property type="entry name" value="Probable transcriptional regulatory protein CLM62_37755"/>
    <property type="match status" value="1"/>
</dbReference>
<dbReference type="Gene3D" id="1.10.10.200">
    <property type="match status" value="1"/>
</dbReference>
<dbReference type="Gene3D" id="3.30.70.980">
    <property type="match status" value="2"/>
</dbReference>
<dbReference type="HAMAP" id="MF_00693">
    <property type="entry name" value="Transcrip_reg_TACO1"/>
    <property type="match status" value="1"/>
</dbReference>
<dbReference type="InterPro" id="IPR017856">
    <property type="entry name" value="Integrase-like_N"/>
</dbReference>
<dbReference type="InterPro" id="IPR048300">
    <property type="entry name" value="TACO1_YebC-like_2nd/3rd_dom"/>
</dbReference>
<dbReference type="InterPro" id="IPR049083">
    <property type="entry name" value="TACO1_YebC_N"/>
</dbReference>
<dbReference type="InterPro" id="IPR002876">
    <property type="entry name" value="Transcrip_reg_TACO1-like"/>
</dbReference>
<dbReference type="InterPro" id="IPR026564">
    <property type="entry name" value="Transcrip_reg_TACO1-like_dom3"/>
</dbReference>
<dbReference type="InterPro" id="IPR029072">
    <property type="entry name" value="YebC-like"/>
</dbReference>
<dbReference type="NCBIfam" id="NF001030">
    <property type="entry name" value="PRK00110.1"/>
    <property type="match status" value="1"/>
</dbReference>
<dbReference type="NCBIfam" id="NF009044">
    <property type="entry name" value="PRK12378.1"/>
    <property type="match status" value="1"/>
</dbReference>
<dbReference type="NCBIfam" id="TIGR01033">
    <property type="entry name" value="YebC/PmpR family DNA-binding transcriptional regulator"/>
    <property type="match status" value="1"/>
</dbReference>
<dbReference type="PANTHER" id="PTHR12532:SF6">
    <property type="entry name" value="TRANSCRIPTIONAL REGULATORY PROTEIN YEBC-RELATED"/>
    <property type="match status" value="1"/>
</dbReference>
<dbReference type="PANTHER" id="PTHR12532">
    <property type="entry name" value="TRANSLATIONAL ACTIVATOR OF CYTOCHROME C OXIDASE 1"/>
    <property type="match status" value="1"/>
</dbReference>
<dbReference type="Pfam" id="PF20772">
    <property type="entry name" value="TACO1_YebC_N"/>
    <property type="match status" value="1"/>
</dbReference>
<dbReference type="Pfam" id="PF01709">
    <property type="entry name" value="Transcrip_reg"/>
    <property type="match status" value="1"/>
</dbReference>
<dbReference type="SUPFAM" id="SSF75625">
    <property type="entry name" value="YebC-like"/>
    <property type="match status" value="1"/>
</dbReference>
<sequence>MSGHSKWATTKHKKAVVDARRGKLFAKLVKTVEVAAKTGGGDPAGNPTLADAIAKAKSQSVPNDNIERAIKRGSGELAGGVSYESVTYEAYGPNGVAVLVECLTDNRNRAASDVRVAITRNGGTPADPGSVSYLFNRKGVVLIDKTPTLTEDDILLAVLDAGAEEVNDVGEAFEVVSEATDLHAVRVAAAEADLTVASADISWLPSVSVPLDAEPARKVLKLVEALEDLDDVQNVWFNADISDDVMELVSS</sequence>
<comment type="subcellular location">
    <subcellularLocation>
        <location evidence="1">Cytoplasm</location>
    </subcellularLocation>
</comment>
<comment type="similarity">
    <text evidence="1">Belongs to the TACO1 family.</text>
</comment>
<name>Y5147_PARS2</name>